<evidence type="ECO:0000255" key="1">
    <source>
        <dbReference type="HAMAP-Rule" id="MF_01328"/>
    </source>
</evidence>
<evidence type="ECO:0000256" key="2">
    <source>
        <dbReference type="SAM" id="MobiDB-lite"/>
    </source>
</evidence>
<evidence type="ECO:0000305" key="3"/>
<sequence length="216" mass="24179">MEKTVYSVEGVALRSVELDESVFGLSVNRGVIYYAINSELSNKRLGTACTKGRSEVHGSNTKPYKQKGTGRARRGDKKSPLLVGGGTIFGPKPRDFHYALPKKVKRLAMKSLLSLKAQGDALTVIEDFTVESGKTRDLIQVLRHFAQRERTVFILQNDDALLKRAGRNIPTLSFLSYNRLRAHDLFYGRKVLVLETAVHKIADFYRSKDAAQDGTY</sequence>
<gene>
    <name evidence="1" type="primary">rplD</name>
    <name type="ordered locus">TPASS_0190</name>
</gene>
<keyword id="KW-0687">Ribonucleoprotein</keyword>
<keyword id="KW-0689">Ribosomal protein</keyword>
<keyword id="KW-0694">RNA-binding</keyword>
<keyword id="KW-0699">rRNA-binding</keyword>
<protein>
    <recommendedName>
        <fullName evidence="1">Large ribosomal subunit protein uL4</fullName>
    </recommendedName>
    <alternativeName>
        <fullName evidence="3">50S ribosomal protein L4</fullName>
    </alternativeName>
</protein>
<name>RL4_TREPS</name>
<proteinExistence type="inferred from homology"/>
<dbReference type="EMBL" id="CP000805">
    <property type="protein sequence ID" value="ACD70616.1"/>
    <property type="molecule type" value="Genomic_DNA"/>
</dbReference>
<dbReference type="RefSeq" id="WP_010881637.1">
    <property type="nucleotide sequence ID" value="NC_021508.1"/>
</dbReference>
<dbReference type="SMR" id="B2S2D7"/>
<dbReference type="GeneID" id="93875978"/>
<dbReference type="KEGG" id="tpp:TPASS_0190"/>
<dbReference type="PATRIC" id="fig|455434.6.peg.193"/>
<dbReference type="Proteomes" id="UP000001202">
    <property type="component" value="Chromosome"/>
</dbReference>
<dbReference type="GO" id="GO:1990904">
    <property type="term" value="C:ribonucleoprotein complex"/>
    <property type="evidence" value="ECO:0007669"/>
    <property type="project" value="UniProtKB-KW"/>
</dbReference>
<dbReference type="GO" id="GO:0005840">
    <property type="term" value="C:ribosome"/>
    <property type="evidence" value="ECO:0007669"/>
    <property type="project" value="UniProtKB-KW"/>
</dbReference>
<dbReference type="GO" id="GO:0019843">
    <property type="term" value="F:rRNA binding"/>
    <property type="evidence" value="ECO:0007669"/>
    <property type="project" value="UniProtKB-UniRule"/>
</dbReference>
<dbReference type="GO" id="GO:0003735">
    <property type="term" value="F:structural constituent of ribosome"/>
    <property type="evidence" value="ECO:0007669"/>
    <property type="project" value="InterPro"/>
</dbReference>
<dbReference type="GO" id="GO:0006412">
    <property type="term" value="P:translation"/>
    <property type="evidence" value="ECO:0007669"/>
    <property type="project" value="UniProtKB-UniRule"/>
</dbReference>
<dbReference type="Gene3D" id="3.40.1370.10">
    <property type="match status" value="1"/>
</dbReference>
<dbReference type="HAMAP" id="MF_01328_B">
    <property type="entry name" value="Ribosomal_uL4_B"/>
    <property type="match status" value="1"/>
</dbReference>
<dbReference type="InterPro" id="IPR002136">
    <property type="entry name" value="Ribosomal_uL4"/>
</dbReference>
<dbReference type="InterPro" id="IPR013005">
    <property type="entry name" value="Ribosomal_uL4-like"/>
</dbReference>
<dbReference type="InterPro" id="IPR023574">
    <property type="entry name" value="Ribosomal_uL4_dom_sf"/>
</dbReference>
<dbReference type="NCBIfam" id="TIGR03953">
    <property type="entry name" value="rplD_bact"/>
    <property type="match status" value="1"/>
</dbReference>
<dbReference type="PANTHER" id="PTHR10746">
    <property type="entry name" value="50S RIBOSOMAL PROTEIN L4"/>
    <property type="match status" value="1"/>
</dbReference>
<dbReference type="PANTHER" id="PTHR10746:SF6">
    <property type="entry name" value="LARGE RIBOSOMAL SUBUNIT PROTEIN UL4M"/>
    <property type="match status" value="1"/>
</dbReference>
<dbReference type="Pfam" id="PF00573">
    <property type="entry name" value="Ribosomal_L4"/>
    <property type="match status" value="1"/>
</dbReference>
<dbReference type="SUPFAM" id="SSF52166">
    <property type="entry name" value="Ribosomal protein L4"/>
    <property type="match status" value="1"/>
</dbReference>
<accession>B2S2D7</accession>
<comment type="function">
    <text evidence="1">One of the primary rRNA binding proteins, this protein initially binds near the 5'-end of the 23S rRNA. It is important during the early stages of 50S assembly. It makes multiple contacts with different domains of the 23S rRNA in the assembled 50S subunit and ribosome.</text>
</comment>
<comment type="function">
    <text evidence="1">Forms part of the polypeptide exit tunnel.</text>
</comment>
<comment type="subunit">
    <text evidence="1">Part of the 50S ribosomal subunit.</text>
</comment>
<comment type="similarity">
    <text evidence="1">Belongs to the universal ribosomal protein uL4 family.</text>
</comment>
<organism>
    <name type="scientific">Treponema pallidum subsp. pallidum (strain SS14)</name>
    <dbReference type="NCBI Taxonomy" id="455434"/>
    <lineage>
        <taxon>Bacteria</taxon>
        <taxon>Pseudomonadati</taxon>
        <taxon>Spirochaetota</taxon>
        <taxon>Spirochaetia</taxon>
        <taxon>Spirochaetales</taxon>
        <taxon>Treponemataceae</taxon>
        <taxon>Treponema</taxon>
    </lineage>
</organism>
<feature type="chain" id="PRO_1000142202" description="Large ribosomal subunit protein uL4">
    <location>
        <begin position="1"/>
        <end position="216"/>
    </location>
</feature>
<feature type="region of interest" description="Disordered" evidence="2">
    <location>
        <begin position="51"/>
        <end position="78"/>
    </location>
</feature>
<feature type="compositionally biased region" description="Basic residues" evidence="2">
    <location>
        <begin position="64"/>
        <end position="76"/>
    </location>
</feature>
<reference key="1">
    <citation type="journal article" date="2008" name="BMC Microbiol.">
        <title>Complete genome sequence of Treponema pallidum ssp. pallidum strain SS14 determined with oligonucleotide arrays.</title>
        <authorList>
            <person name="Matejkova P."/>
            <person name="Strouhal M."/>
            <person name="Smajs D."/>
            <person name="Norris S.J."/>
            <person name="Palzkill T."/>
            <person name="Petrosino J.F."/>
            <person name="Sodergren E."/>
            <person name="Norton J.E."/>
            <person name="Singh J."/>
            <person name="Richmond T.A."/>
            <person name="Molla M.N."/>
            <person name="Albert T.J."/>
            <person name="Weinstock G.M."/>
        </authorList>
    </citation>
    <scope>NUCLEOTIDE SEQUENCE [LARGE SCALE GENOMIC DNA]</scope>
    <source>
        <strain>SS14</strain>
    </source>
</reference>